<evidence type="ECO:0000250" key="1">
    <source>
        <dbReference type="UniProtKB" id="Q9CZ83"/>
    </source>
</evidence>
<evidence type="ECO:0000255" key="2"/>
<evidence type="ECO:0000269" key="3">
    <source>
    </source>
</evidence>
<evidence type="ECO:0000269" key="4">
    <source>
    </source>
</evidence>
<evidence type="ECO:0000303" key="5">
    <source>
    </source>
</evidence>
<evidence type="ECO:0000303" key="6">
    <source>
    </source>
</evidence>
<evidence type="ECO:0000303" key="7">
    <source>
    </source>
</evidence>
<evidence type="ECO:0000305" key="8"/>
<evidence type="ECO:0000305" key="9">
    <source>
    </source>
</evidence>
<evidence type="ECO:0007744" key="10">
    <source>
        <dbReference type="PDB" id="3J9M"/>
    </source>
</evidence>
<evidence type="ECO:0007744" key="11">
    <source>
        <dbReference type="PDB" id="5OOL"/>
    </source>
</evidence>
<evidence type="ECO:0007744" key="12">
    <source>
        <dbReference type="PDB" id="5OOM"/>
    </source>
</evidence>
<evidence type="ECO:0007829" key="13">
    <source>
        <dbReference type="PDB" id="5OOL"/>
    </source>
</evidence>
<evidence type="ECO:0007829" key="14">
    <source>
        <dbReference type="PDB" id="7OF0"/>
    </source>
</evidence>
<evidence type="ECO:0007829" key="15">
    <source>
        <dbReference type="PDB" id="8QU5"/>
    </source>
</evidence>
<protein>
    <recommendedName>
        <fullName evidence="6">Large ribosomal subunit protein mL55</fullName>
    </recommendedName>
    <alternativeName>
        <fullName>39S ribosomal protein L55, mitochondrial</fullName>
        <shortName>L55mt</shortName>
        <shortName>MRP-L55</shortName>
    </alternativeName>
    <alternativeName>
        <fullName evidence="7">Mitochondrial large ribosomal subunit protein bL31m</fullName>
    </alternativeName>
</protein>
<keyword id="KW-0002">3D-structure</keyword>
<keyword id="KW-0025">Alternative splicing</keyword>
<keyword id="KW-0496">Mitochondrion</keyword>
<keyword id="KW-0597">Phosphoprotein</keyword>
<keyword id="KW-1267">Proteomics identification</keyword>
<keyword id="KW-1185">Reference proteome</keyword>
<keyword id="KW-0687">Ribonucleoprotein</keyword>
<keyword id="KW-0689">Ribosomal protein</keyword>
<keyword id="KW-0809">Transit peptide</keyword>
<dbReference type="EMBL" id="AY358771">
    <property type="protein sequence ID" value="AAQ89131.1"/>
    <property type="molecule type" value="mRNA"/>
</dbReference>
<dbReference type="EMBL" id="AL136379">
    <property type="status" value="NOT_ANNOTATED_CDS"/>
    <property type="molecule type" value="Genomic_DNA"/>
</dbReference>
<dbReference type="EMBL" id="BC052806">
    <property type="protein sequence ID" value="AAH52806.1"/>
    <property type="molecule type" value="mRNA"/>
</dbReference>
<dbReference type="CCDS" id="CCDS1567.1">
    <molecule id="Q7Z7F7-1"/>
</dbReference>
<dbReference type="CCDS" id="CCDS44325.1">
    <molecule id="Q7Z7F7-2"/>
</dbReference>
<dbReference type="RefSeq" id="NP_001308213.1">
    <molecule id="Q7Z7F7-1"/>
    <property type="nucleotide sequence ID" value="NM_001321284.2"/>
</dbReference>
<dbReference type="RefSeq" id="NP_852106.1">
    <molecule id="Q7Z7F7-1"/>
    <property type="nucleotide sequence ID" value="NM_181441.3"/>
</dbReference>
<dbReference type="RefSeq" id="NP_852119.1">
    <molecule id="Q7Z7F7-1"/>
    <property type="nucleotide sequence ID" value="NM_181454.3"/>
</dbReference>
<dbReference type="RefSeq" id="NP_852120.1">
    <molecule id="Q7Z7F7-1"/>
    <property type="nucleotide sequence ID" value="NM_181455.3"/>
</dbReference>
<dbReference type="RefSeq" id="NP_852121.1">
    <molecule id="Q7Z7F7-1"/>
    <property type="nucleotide sequence ID" value="NM_181456.3"/>
</dbReference>
<dbReference type="RefSeq" id="NP_852127.2">
    <molecule id="Q7Z7F7-2"/>
    <property type="nucleotide sequence ID" value="NM_181462.3"/>
</dbReference>
<dbReference type="RefSeq" id="NP_852128.1">
    <molecule id="Q7Z7F7-1"/>
    <property type="nucleotide sequence ID" value="NM_181463.3"/>
</dbReference>
<dbReference type="RefSeq" id="NP_852129.1">
    <molecule id="Q7Z7F7-1"/>
    <property type="nucleotide sequence ID" value="NM_181464.3"/>
</dbReference>
<dbReference type="RefSeq" id="NP_852130.1">
    <molecule id="Q7Z7F7-1"/>
    <property type="nucleotide sequence ID" value="NM_181465.3"/>
</dbReference>
<dbReference type="RefSeq" id="XP_005273116.1">
    <molecule id="Q7Z7F7-1"/>
    <property type="nucleotide sequence ID" value="XM_005273059.4"/>
</dbReference>
<dbReference type="RefSeq" id="XP_005273118.1">
    <molecule id="Q7Z7F7-1"/>
    <property type="nucleotide sequence ID" value="XM_005273061.6"/>
</dbReference>
<dbReference type="RefSeq" id="XP_005273119.1">
    <molecule id="Q7Z7F7-1"/>
    <property type="nucleotide sequence ID" value="XM_005273062.4"/>
</dbReference>
<dbReference type="RefSeq" id="XP_005273120.1">
    <molecule id="Q7Z7F7-1"/>
    <property type="nucleotide sequence ID" value="XM_005273063.6"/>
</dbReference>
<dbReference type="RefSeq" id="XP_011542396.1">
    <property type="nucleotide sequence ID" value="XM_011544094.2"/>
</dbReference>
<dbReference type="RefSeq" id="XP_011542397.1">
    <molecule id="Q7Z7F7-1"/>
    <property type="nucleotide sequence ID" value="XM_011544095.4"/>
</dbReference>
<dbReference type="RefSeq" id="XP_047302035.1">
    <molecule id="Q7Z7F7-1"/>
    <property type="nucleotide sequence ID" value="XM_047446079.1"/>
</dbReference>
<dbReference type="RefSeq" id="XP_047302051.1">
    <molecule id="Q7Z7F7-1"/>
    <property type="nucleotide sequence ID" value="XM_047446095.1"/>
</dbReference>
<dbReference type="RefSeq" id="XP_047302052.1">
    <molecule id="Q7Z7F7-1"/>
    <property type="nucleotide sequence ID" value="XM_047446096.1"/>
</dbReference>
<dbReference type="RefSeq" id="XP_047302054.1">
    <molecule id="Q7Z7F7-1"/>
    <property type="nucleotide sequence ID" value="XM_047446098.1"/>
</dbReference>
<dbReference type="RefSeq" id="XP_047302062.1">
    <molecule id="Q7Z7F7-1"/>
    <property type="nucleotide sequence ID" value="XM_047446106.1"/>
</dbReference>
<dbReference type="RefSeq" id="XP_047302069.1">
    <molecule id="Q7Z7F7-1"/>
    <property type="nucleotide sequence ID" value="XM_047446113.1"/>
</dbReference>
<dbReference type="RefSeq" id="XP_047302079.1">
    <molecule id="Q7Z7F7-1"/>
    <property type="nucleotide sequence ID" value="XM_047446123.1"/>
</dbReference>
<dbReference type="RefSeq" id="XP_047302089.1">
    <molecule id="Q7Z7F7-1"/>
    <property type="nucleotide sequence ID" value="XM_047446133.1"/>
</dbReference>
<dbReference type="RefSeq" id="XP_047302093.1">
    <molecule id="Q7Z7F7-1"/>
    <property type="nucleotide sequence ID" value="XM_047446137.1"/>
</dbReference>
<dbReference type="RefSeq" id="XP_047302095.1">
    <molecule id="Q7Z7F7-1"/>
    <property type="nucleotide sequence ID" value="XM_047446139.1"/>
</dbReference>
<dbReference type="RefSeq" id="XP_047302099.1">
    <molecule id="Q7Z7F7-1"/>
    <property type="nucleotide sequence ID" value="XM_047446143.1"/>
</dbReference>
<dbReference type="RefSeq" id="XP_054190406.1">
    <molecule id="Q7Z7F7-1"/>
    <property type="nucleotide sequence ID" value="XM_054334431.1"/>
</dbReference>
<dbReference type="RefSeq" id="XP_054190407.1">
    <molecule id="Q7Z7F7-1"/>
    <property type="nucleotide sequence ID" value="XM_054334432.1"/>
</dbReference>
<dbReference type="RefSeq" id="XP_054190408.1">
    <molecule id="Q7Z7F7-1"/>
    <property type="nucleotide sequence ID" value="XM_054334433.1"/>
</dbReference>
<dbReference type="RefSeq" id="XP_054190409.1">
    <molecule id="Q7Z7F7-1"/>
    <property type="nucleotide sequence ID" value="XM_054334434.1"/>
</dbReference>
<dbReference type="RefSeq" id="XP_054190410.1">
    <molecule id="Q7Z7F7-1"/>
    <property type="nucleotide sequence ID" value="XM_054334435.1"/>
</dbReference>
<dbReference type="RefSeq" id="XP_054190411.1">
    <molecule id="Q7Z7F7-1"/>
    <property type="nucleotide sequence ID" value="XM_054334436.1"/>
</dbReference>
<dbReference type="RefSeq" id="XP_054190412.1">
    <molecule id="Q7Z7F7-1"/>
    <property type="nucleotide sequence ID" value="XM_054334437.1"/>
</dbReference>
<dbReference type="RefSeq" id="XP_054190413.1">
    <molecule id="Q7Z7F7-1"/>
    <property type="nucleotide sequence ID" value="XM_054334438.1"/>
</dbReference>
<dbReference type="RefSeq" id="XP_054190414.1">
    <molecule id="Q7Z7F7-1"/>
    <property type="nucleotide sequence ID" value="XM_054334439.1"/>
</dbReference>
<dbReference type="RefSeq" id="XP_054190415.1">
    <molecule id="Q7Z7F7-1"/>
    <property type="nucleotide sequence ID" value="XM_054334440.1"/>
</dbReference>
<dbReference type="RefSeq" id="XP_054190416.1">
    <molecule id="Q7Z7F7-1"/>
    <property type="nucleotide sequence ID" value="XM_054334441.1"/>
</dbReference>
<dbReference type="RefSeq" id="XP_054190417.1">
    <molecule id="Q7Z7F7-1"/>
    <property type="nucleotide sequence ID" value="XM_054334442.1"/>
</dbReference>
<dbReference type="RefSeq" id="XP_054190418.1">
    <molecule id="Q7Z7F7-1"/>
    <property type="nucleotide sequence ID" value="XM_054334443.1"/>
</dbReference>
<dbReference type="RefSeq" id="XP_054190419.1">
    <molecule id="Q7Z7F7-1"/>
    <property type="nucleotide sequence ID" value="XM_054334444.1"/>
</dbReference>
<dbReference type="RefSeq" id="XP_054190420.1">
    <molecule id="Q7Z7F7-1"/>
    <property type="nucleotide sequence ID" value="XM_054334445.1"/>
</dbReference>
<dbReference type="RefSeq" id="XP_054190421.1">
    <molecule id="Q7Z7F7-1"/>
    <property type="nucleotide sequence ID" value="XM_054334446.1"/>
</dbReference>
<dbReference type="RefSeq" id="XP_054190422.1">
    <molecule id="Q7Z7F7-1"/>
    <property type="nucleotide sequence ID" value="XM_054334447.1"/>
</dbReference>
<dbReference type="RefSeq" id="XP_054190423.1">
    <molecule id="Q7Z7F7-1"/>
    <property type="nucleotide sequence ID" value="XM_054334448.1"/>
</dbReference>
<dbReference type="PDB" id="3J9M">
    <property type="method" value="EM"/>
    <property type="resolution" value="3.50 A"/>
    <property type="chains" value="m=1-128"/>
</dbReference>
<dbReference type="PDB" id="5OOL">
    <property type="method" value="EM"/>
    <property type="resolution" value="3.06 A"/>
    <property type="chains" value="m=1-128"/>
</dbReference>
<dbReference type="PDB" id="5OOM">
    <property type="method" value="EM"/>
    <property type="resolution" value="3.03 A"/>
    <property type="chains" value="m=1-128"/>
</dbReference>
<dbReference type="PDB" id="6I9R">
    <property type="method" value="EM"/>
    <property type="resolution" value="3.90 A"/>
    <property type="chains" value="m=1-128"/>
</dbReference>
<dbReference type="PDB" id="6NU2">
    <property type="method" value="EM"/>
    <property type="resolution" value="3.90 A"/>
    <property type="chains" value="m=34-78"/>
</dbReference>
<dbReference type="PDB" id="6NU3">
    <property type="method" value="EM"/>
    <property type="resolution" value="4.40 A"/>
    <property type="chains" value="m=1-128"/>
</dbReference>
<dbReference type="PDB" id="6VLZ">
    <property type="method" value="EM"/>
    <property type="resolution" value="2.97 A"/>
    <property type="chains" value="m=1-128"/>
</dbReference>
<dbReference type="PDB" id="6VMI">
    <property type="method" value="EM"/>
    <property type="resolution" value="2.96 A"/>
    <property type="chains" value="m=1-128"/>
</dbReference>
<dbReference type="PDB" id="6ZM5">
    <property type="method" value="EM"/>
    <property type="resolution" value="2.89 A"/>
    <property type="chains" value="m=1-128"/>
</dbReference>
<dbReference type="PDB" id="6ZM6">
    <property type="method" value="EM"/>
    <property type="resolution" value="2.59 A"/>
    <property type="chains" value="m=1-128"/>
</dbReference>
<dbReference type="PDB" id="6ZS9">
    <property type="method" value="EM"/>
    <property type="resolution" value="4.00 A"/>
    <property type="chains" value="m=1-128"/>
</dbReference>
<dbReference type="PDB" id="6ZSA">
    <property type="method" value="EM"/>
    <property type="resolution" value="4.00 A"/>
    <property type="chains" value="m=1-128"/>
</dbReference>
<dbReference type="PDB" id="6ZSB">
    <property type="method" value="EM"/>
    <property type="resolution" value="4.50 A"/>
    <property type="chains" value="m=1-128"/>
</dbReference>
<dbReference type="PDB" id="6ZSC">
    <property type="method" value="EM"/>
    <property type="resolution" value="3.50 A"/>
    <property type="chains" value="m=1-128"/>
</dbReference>
<dbReference type="PDB" id="6ZSD">
    <property type="method" value="EM"/>
    <property type="resolution" value="3.70 A"/>
    <property type="chains" value="m=1-128"/>
</dbReference>
<dbReference type="PDB" id="6ZSE">
    <property type="method" value="EM"/>
    <property type="resolution" value="5.00 A"/>
    <property type="chains" value="m=1-128"/>
</dbReference>
<dbReference type="PDB" id="6ZSG">
    <property type="method" value="EM"/>
    <property type="resolution" value="4.00 A"/>
    <property type="chains" value="m=1-128"/>
</dbReference>
<dbReference type="PDB" id="7A5F">
    <property type="method" value="EM"/>
    <property type="resolution" value="4.40 A"/>
    <property type="chains" value="m3=1-128"/>
</dbReference>
<dbReference type="PDB" id="7A5G">
    <property type="method" value="EM"/>
    <property type="resolution" value="4.33 A"/>
    <property type="chains" value="m3=1-128"/>
</dbReference>
<dbReference type="PDB" id="7A5H">
    <property type="method" value="EM"/>
    <property type="resolution" value="3.30 A"/>
    <property type="chains" value="m=1-128"/>
</dbReference>
<dbReference type="PDB" id="7A5I">
    <property type="method" value="EM"/>
    <property type="resolution" value="3.70 A"/>
    <property type="chains" value="m3=1-128"/>
</dbReference>
<dbReference type="PDB" id="7A5J">
    <property type="method" value="EM"/>
    <property type="resolution" value="3.10 A"/>
    <property type="chains" value="m=1-128"/>
</dbReference>
<dbReference type="PDB" id="7A5K">
    <property type="method" value="EM"/>
    <property type="resolution" value="3.70 A"/>
    <property type="chains" value="m3=1-128"/>
</dbReference>
<dbReference type="PDB" id="7L08">
    <property type="method" value="EM"/>
    <property type="resolution" value="3.49 A"/>
    <property type="chains" value="m=1-128"/>
</dbReference>
<dbReference type="PDB" id="7L20">
    <property type="method" value="EM"/>
    <property type="resolution" value="3.15 A"/>
    <property type="chains" value="m=1-128"/>
</dbReference>
<dbReference type="PDB" id="7O9K">
    <property type="method" value="EM"/>
    <property type="resolution" value="3.10 A"/>
    <property type="chains" value="m=1-128"/>
</dbReference>
<dbReference type="PDB" id="7O9M">
    <property type="method" value="EM"/>
    <property type="resolution" value="2.50 A"/>
    <property type="chains" value="m=1-128"/>
</dbReference>
<dbReference type="PDB" id="7ODR">
    <property type="method" value="EM"/>
    <property type="resolution" value="2.90 A"/>
    <property type="chains" value="m=1-128"/>
</dbReference>
<dbReference type="PDB" id="7ODS">
    <property type="method" value="EM"/>
    <property type="resolution" value="3.10 A"/>
    <property type="chains" value="m=1-128"/>
</dbReference>
<dbReference type="PDB" id="7ODT">
    <property type="method" value="EM"/>
    <property type="resolution" value="3.10 A"/>
    <property type="chains" value="m=1-128"/>
</dbReference>
<dbReference type="PDB" id="7OF0">
    <property type="method" value="EM"/>
    <property type="resolution" value="2.20 A"/>
    <property type="chains" value="m=1-128"/>
</dbReference>
<dbReference type="PDB" id="7OF2">
    <property type="method" value="EM"/>
    <property type="resolution" value="2.70 A"/>
    <property type="chains" value="m=1-128"/>
</dbReference>
<dbReference type="PDB" id="7OF3">
    <property type="method" value="EM"/>
    <property type="resolution" value="2.70 A"/>
    <property type="chains" value="m=1-128"/>
</dbReference>
<dbReference type="PDB" id="7OF4">
    <property type="method" value="EM"/>
    <property type="resolution" value="2.70 A"/>
    <property type="chains" value="m=1-128"/>
</dbReference>
<dbReference type="PDB" id="7OF5">
    <property type="method" value="EM"/>
    <property type="resolution" value="2.90 A"/>
    <property type="chains" value="m=1-128"/>
</dbReference>
<dbReference type="PDB" id="7OF6">
    <property type="method" value="EM"/>
    <property type="resolution" value="2.60 A"/>
    <property type="chains" value="m=1-128"/>
</dbReference>
<dbReference type="PDB" id="7OF7">
    <property type="method" value="EM"/>
    <property type="resolution" value="2.50 A"/>
    <property type="chains" value="m=1-128"/>
</dbReference>
<dbReference type="PDB" id="7OG4">
    <property type="method" value="EM"/>
    <property type="resolution" value="3.80 A"/>
    <property type="chains" value="m=1-128"/>
</dbReference>
<dbReference type="PDB" id="7OI7">
    <property type="method" value="EM"/>
    <property type="resolution" value="3.50 A"/>
    <property type="chains" value="m=1-128"/>
</dbReference>
<dbReference type="PDB" id="7OI8">
    <property type="method" value="EM"/>
    <property type="resolution" value="3.50 A"/>
    <property type="chains" value="m=1-128"/>
</dbReference>
<dbReference type="PDB" id="7OI9">
    <property type="method" value="EM"/>
    <property type="resolution" value="3.30 A"/>
    <property type="chains" value="m=1-128"/>
</dbReference>
<dbReference type="PDB" id="7OIA">
    <property type="method" value="EM"/>
    <property type="resolution" value="3.20 A"/>
    <property type="chains" value="m=1-128"/>
</dbReference>
<dbReference type="PDB" id="7OIB">
    <property type="method" value="EM"/>
    <property type="resolution" value="3.30 A"/>
    <property type="chains" value="m=1-128"/>
</dbReference>
<dbReference type="PDB" id="7OIC">
    <property type="method" value="EM"/>
    <property type="resolution" value="3.10 A"/>
    <property type="chains" value="m=1-128"/>
</dbReference>
<dbReference type="PDB" id="7OID">
    <property type="method" value="EM"/>
    <property type="resolution" value="3.70 A"/>
    <property type="chains" value="m=1-128"/>
</dbReference>
<dbReference type="PDB" id="7OIE">
    <property type="method" value="EM"/>
    <property type="resolution" value="3.50 A"/>
    <property type="chains" value="m=1-128"/>
</dbReference>
<dbReference type="PDB" id="7PD3">
    <property type="method" value="EM"/>
    <property type="resolution" value="3.40 A"/>
    <property type="chains" value="m=1-128"/>
</dbReference>
<dbReference type="PDB" id="7PO4">
    <property type="method" value="EM"/>
    <property type="resolution" value="2.56 A"/>
    <property type="chains" value="m=1-128"/>
</dbReference>
<dbReference type="PDB" id="7QI4">
    <property type="method" value="EM"/>
    <property type="resolution" value="2.21 A"/>
    <property type="chains" value="m=1-128"/>
</dbReference>
<dbReference type="PDB" id="7QI5">
    <property type="method" value="EM"/>
    <property type="resolution" value="2.63 A"/>
    <property type="chains" value="m=1-128"/>
</dbReference>
<dbReference type="PDB" id="7QI6">
    <property type="method" value="EM"/>
    <property type="resolution" value="2.98 A"/>
    <property type="chains" value="m=1-128"/>
</dbReference>
<dbReference type="PDB" id="8ANY">
    <property type="method" value="EM"/>
    <property type="resolution" value="2.85 A"/>
    <property type="chains" value="m=1-128"/>
</dbReference>
<dbReference type="PDB" id="8K2A">
    <property type="method" value="EM"/>
    <property type="resolution" value="2.90 A"/>
    <property type="chains" value="L5=1-128"/>
</dbReference>
<dbReference type="PDB" id="8K2B">
    <property type="method" value="EM"/>
    <property type="resolution" value="3.40 A"/>
    <property type="chains" value="L5=1-128"/>
</dbReference>
<dbReference type="PDB" id="8OIR">
    <property type="method" value="EM"/>
    <property type="resolution" value="3.10 A"/>
    <property type="chains" value="Bd=1-128"/>
</dbReference>
<dbReference type="PDB" id="8OIS">
    <property type="method" value="EM"/>
    <property type="resolution" value="3.00 A"/>
    <property type="chains" value="Bd=1-128"/>
</dbReference>
<dbReference type="PDB" id="8OIT">
    <property type="method" value="EM"/>
    <property type="resolution" value="2.90 A"/>
    <property type="chains" value="Bd=1-128"/>
</dbReference>
<dbReference type="PDB" id="8PK0">
    <property type="method" value="EM"/>
    <property type="resolution" value="3.03 A"/>
    <property type="chains" value="m=1-128"/>
</dbReference>
<dbReference type="PDB" id="8QSJ">
    <property type="method" value="EM"/>
    <property type="resolution" value="3.00 A"/>
    <property type="chains" value="m=1-128"/>
</dbReference>
<dbReference type="PDB" id="8QU5">
    <property type="method" value="EM"/>
    <property type="resolution" value="2.42 A"/>
    <property type="chains" value="m=1-128"/>
</dbReference>
<dbReference type="PDB" id="8RRI">
    <property type="method" value="EM"/>
    <property type="resolution" value="2.40 A"/>
    <property type="chains" value="m=1-128"/>
</dbReference>
<dbReference type="PDB" id="8XT0">
    <property type="method" value="EM"/>
    <property type="resolution" value="3.20 A"/>
    <property type="chains" value="L5=1-128"/>
</dbReference>
<dbReference type="PDB" id="8XT1">
    <property type="method" value="EM"/>
    <property type="resolution" value="3.10 A"/>
    <property type="chains" value="L5=1-128"/>
</dbReference>
<dbReference type="PDB" id="8XT2">
    <property type="method" value="EM"/>
    <property type="resolution" value="3.30 A"/>
    <property type="chains" value="L5=1-128"/>
</dbReference>
<dbReference type="PDB" id="8XT3">
    <property type="method" value="EM"/>
    <property type="resolution" value="3.10 A"/>
    <property type="chains" value="L5=1-128"/>
</dbReference>
<dbReference type="PDBsum" id="3J9M"/>
<dbReference type="PDBsum" id="5OOL"/>
<dbReference type="PDBsum" id="5OOM"/>
<dbReference type="PDBsum" id="6I9R"/>
<dbReference type="PDBsum" id="6NU2"/>
<dbReference type="PDBsum" id="6NU3"/>
<dbReference type="PDBsum" id="6VLZ"/>
<dbReference type="PDBsum" id="6VMI"/>
<dbReference type="PDBsum" id="6ZM5"/>
<dbReference type="PDBsum" id="6ZM6"/>
<dbReference type="PDBsum" id="6ZS9"/>
<dbReference type="PDBsum" id="6ZSA"/>
<dbReference type="PDBsum" id="6ZSB"/>
<dbReference type="PDBsum" id="6ZSC"/>
<dbReference type="PDBsum" id="6ZSD"/>
<dbReference type="PDBsum" id="6ZSE"/>
<dbReference type="PDBsum" id="6ZSG"/>
<dbReference type="PDBsum" id="7A5F"/>
<dbReference type="PDBsum" id="7A5G"/>
<dbReference type="PDBsum" id="7A5H"/>
<dbReference type="PDBsum" id="7A5I"/>
<dbReference type="PDBsum" id="7A5J"/>
<dbReference type="PDBsum" id="7A5K"/>
<dbReference type="PDBsum" id="7L08"/>
<dbReference type="PDBsum" id="7L20"/>
<dbReference type="PDBsum" id="7O9K"/>
<dbReference type="PDBsum" id="7O9M"/>
<dbReference type="PDBsum" id="7ODR"/>
<dbReference type="PDBsum" id="7ODS"/>
<dbReference type="PDBsum" id="7ODT"/>
<dbReference type="PDBsum" id="7OF0"/>
<dbReference type="PDBsum" id="7OF2"/>
<dbReference type="PDBsum" id="7OF3"/>
<dbReference type="PDBsum" id="7OF4"/>
<dbReference type="PDBsum" id="7OF5"/>
<dbReference type="PDBsum" id="7OF6"/>
<dbReference type="PDBsum" id="7OF7"/>
<dbReference type="PDBsum" id="7OG4"/>
<dbReference type="PDBsum" id="7OI7"/>
<dbReference type="PDBsum" id="7OI8"/>
<dbReference type="PDBsum" id="7OI9"/>
<dbReference type="PDBsum" id="7OIA"/>
<dbReference type="PDBsum" id="7OIB"/>
<dbReference type="PDBsum" id="7OIC"/>
<dbReference type="PDBsum" id="7OID"/>
<dbReference type="PDBsum" id="7OIE"/>
<dbReference type="PDBsum" id="7PD3"/>
<dbReference type="PDBsum" id="7PO4"/>
<dbReference type="PDBsum" id="7QI4"/>
<dbReference type="PDBsum" id="7QI5"/>
<dbReference type="PDBsum" id="7QI6"/>
<dbReference type="PDBsum" id="8ANY"/>
<dbReference type="PDBsum" id="8K2A"/>
<dbReference type="PDBsum" id="8K2B"/>
<dbReference type="PDBsum" id="8OIR"/>
<dbReference type="PDBsum" id="8OIS"/>
<dbReference type="PDBsum" id="8OIT"/>
<dbReference type="PDBsum" id="8PK0"/>
<dbReference type="PDBsum" id="8QSJ"/>
<dbReference type="PDBsum" id="8QU5"/>
<dbReference type="PDBsum" id="8RRI"/>
<dbReference type="PDBsum" id="8XT0"/>
<dbReference type="PDBsum" id="8XT1"/>
<dbReference type="PDBsum" id="8XT2"/>
<dbReference type="PDBsum" id="8XT3"/>
<dbReference type="EMDB" id="EMD-0514"/>
<dbReference type="EMDB" id="EMD-0515"/>
<dbReference type="EMDB" id="EMD-11278"/>
<dbReference type="EMDB" id="EMD-11279"/>
<dbReference type="EMDB" id="EMD-11390"/>
<dbReference type="EMDB" id="EMD-11391"/>
<dbReference type="EMDB" id="EMD-11392"/>
<dbReference type="EMDB" id="EMD-11393"/>
<dbReference type="EMDB" id="EMD-11394"/>
<dbReference type="EMDB" id="EMD-11395"/>
<dbReference type="EMDB" id="EMD-11397"/>
<dbReference type="EMDB" id="EMD-11641"/>
<dbReference type="EMDB" id="EMD-11642"/>
<dbReference type="EMDB" id="EMD-11643"/>
<dbReference type="EMDB" id="EMD-11644"/>
<dbReference type="EMDB" id="EMD-11645"/>
<dbReference type="EMDB" id="EMD-11646"/>
<dbReference type="EMDB" id="EMD-12763"/>
<dbReference type="EMDB" id="EMD-12764"/>
<dbReference type="EMDB" id="EMD-12845"/>
<dbReference type="EMDB" id="EMD-12846"/>
<dbReference type="EMDB" id="EMD-12847"/>
<dbReference type="EMDB" id="EMD-12865"/>
<dbReference type="EMDB" id="EMD-12867"/>
<dbReference type="EMDB" id="EMD-12868"/>
<dbReference type="EMDB" id="EMD-12869"/>
<dbReference type="EMDB" id="EMD-12870"/>
<dbReference type="EMDB" id="EMD-12871"/>
<dbReference type="EMDB" id="EMD-12872"/>
<dbReference type="EMDB" id="EMD-12877"/>
<dbReference type="EMDB" id="EMD-12920"/>
<dbReference type="EMDB" id="EMD-12921"/>
<dbReference type="EMDB" id="EMD-12922"/>
<dbReference type="EMDB" id="EMD-12923"/>
<dbReference type="EMDB" id="EMD-12924"/>
<dbReference type="EMDB" id="EMD-12925"/>
<dbReference type="EMDB" id="EMD-12926"/>
<dbReference type="EMDB" id="EMD-12927"/>
<dbReference type="EMDB" id="EMD-13329"/>
<dbReference type="EMDB" id="EMD-13562"/>
<dbReference type="EMDB" id="EMD-13980"/>
<dbReference type="EMDB" id="EMD-13981"/>
<dbReference type="EMDB" id="EMD-13982"/>
<dbReference type="EMDB" id="EMD-15544"/>
<dbReference type="EMDB" id="EMD-16897"/>
<dbReference type="EMDB" id="EMD-16898"/>
<dbReference type="EMDB" id="EMD-16899"/>
<dbReference type="EMDB" id="EMD-17719"/>
<dbReference type="EMDB" id="EMD-19460"/>
<dbReference type="EMDB" id="EMD-21233"/>
<dbReference type="EMDB" id="EMD-21242"/>
<dbReference type="EMDB" id="EMD-23096"/>
<dbReference type="EMDB" id="EMD-23121"/>
<dbReference type="EMDB" id="EMD-36836"/>
<dbReference type="EMDB" id="EMD-36837"/>
<dbReference type="EMDB" id="EMD-3842"/>
<dbReference type="EMDB" id="EMD-3843"/>
<dbReference type="EMDB" id="EMD-38632"/>
<dbReference type="EMDB" id="EMD-38633"/>
<dbReference type="EMDB" id="EMD-38634"/>
<dbReference type="EMDB" id="EMD-38635"/>
<dbReference type="EMDB" id="EMD-4434"/>
<dbReference type="SMR" id="Q7Z7F7"/>
<dbReference type="BioGRID" id="126105">
    <property type="interactions" value="146"/>
</dbReference>
<dbReference type="ComplexPortal" id="CPX-5226">
    <property type="entry name" value="39S mitochondrial large ribosomal subunit"/>
</dbReference>
<dbReference type="CORUM" id="Q7Z7F7"/>
<dbReference type="FunCoup" id="Q7Z7F7">
    <property type="interactions" value="1405"/>
</dbReference>
<dbReference type="IntAct" id="Q7Z7F7">
    <property type="interactions" value="68"/>
</dbReference>
<dbReference type="MINT" id="Q7Z7F7"/>
<dbReference type="STRING" id="9606.ENSP00000403614"/>
<dbReference type="GlyGen" id="Q7Z7F7">
    <property type="glycosylation" value="1 site, 1 O-linked glycan (1 site)"/>
</dbReference>
<dbReference type="iPTMnet" id="Q7Z7F7"/>
<dbReference type="PhosphoSitePlus" id="Q7Z7F7"/>
<dbReference type="BioMuta" id="MRPL55"/>
<dbReference type="DMDM" id="74750237"/>
<dbReference type="jPOST" id="Q7Z7F7"/>
<dbReference type="MassIVE" id="Q7Z7F7"/>
<dbReference type="PaxDb" id="9606-ENSP00000403614"/>
<dbReference type="PeptideAtlas" id="Q7Z7F7"/>
<dbReference type="ProteomicsDB" id="69531">
    <molecule id="Q7Z7F7-1"/>
</dbReference>
<dbReference type="ProteomicsDB" id="69532">
    <molecule id="Q7Z7F7-2"/>
</dbReference>
<dbReference type="Pumba" id="Q7Z7F7"/>
<dbReference type="TopDownProteomics" id="Q7Z7F7-1">
    <molecule id="Q7Z7F7-1"/>
</dbReference>
<dbReference type="Antibodypedia" id="34660">
    <property type="antibodies" value="77 antibodies from 19 providers"/>
</dbReference>
<dbReference type="DNASU" id="128308"/>
<dbReference type="Ensembl" id="ENST00000295008.8">
    <molecule id="Q7Z7F7-1"/>
    <property type="protein sequence ID" value="ENSP00000295008.4"/>
    <property type="gene ID" value="ENSG00000162910.19"/>
</dbReference>
<dbReference type="Ensembl" id="ENST00000336300.9">
    <molecule id="Q7Z7F7-1"/>
    <property type="protein sequence ID" value="ENSP00000337361.5"/>
    <property type="gene ID" value="ENSG00000162910.19"/>
</dbReference>
<dbReference type="Ensembl" id="ENST00000336520.8">
    <molecule id="Q7Z7F7-1"/>
    <property type="protein sequence ID" value="ENSP00000337342.3"/>
    <property type="gene ID" value="ENSG00000162910.19"/>
</dbReference>
<dbReference type="Ensembl" id="ENST00000348259.9">
    <molecule id="Q7Z7F7-1"/>
    <property type="protein sequence ID" value="ENSP00000338189.5"/>
    <property type="gene ID" value="ENSG00000162910.19"/>
</dbReference>
<dbReference type="Ensembl" id="ENST00000366733.5">
    <molecule id="Q7Z7F7-1"/>
    <property type="protein sequence ID" value="ENSP00000355694.1"/>
    <property type="gene ID" value="ENSG00000162910.19"/>
</dbReference>
<dbReference type="Ensembl" id="ENST00000366734.5">
    <molecule id="Q7Z7F7-1"/>
    <property type="protein sequence ID" value="ENSP00000355695.1"/>
    <property type="gene ID" value="ENSG00000162910.19"/>
</dbReference>
<dbReference type="Ensembl" id="ENST00000366735.5">
    <molecule id="Q7Z7F7-1"/>
    <property type="protein sequence ID" value="ENSP00000355696.1"/>
    <property type="gene ID" value="ENSG00000162910.19"/>
</dbReference>
<dbReference type="Ensembl" id="ENST00000366736.5">
    <molecule id="Q7Z7F7-1"/>
    <property type="protein sequence ID" value="ENSP00000355697.1"/>
    <property type="gene ID" value="ENSG00000162910.19"/>
</dbReference>
<dbReference type="Ensembl" id="ENST00000366738.5">
    <molecule id="Q7Z7F7-2"/>
    <property type="protein sequence ID" value="ENSP00000355699.1"/>
    <property type="gene ID" value="ENSG00000162910.19"/>
</dbReference>
<dbReference type="Ensembl" id="ENST00000366739.5">
    <molecule id="Q7Z7F7-1"/>
    <property type="protein sequence ID" value="ENSP00000355700.1"/>
    <property type="gene ID" value="ENSG00000162910.19"/>
</dbReference>
<dbReference type="Ensembl" id="ENST00000366740.5">
    <molecule id="Q7Z7F7-1"/>
    <property type="protein sequence ID" value="ENSP00000355701.1"/>
    <property type="gene ID" value="ENSG00000162910.19"/>
</dbReference>
<dbReference type="Ensembl" id="ENST00000366741.5">
    <molecule id="Q7Z7F7-1"/>
    <property type="protein sequence ID" value="ENSP00000355702.1"/>
    <property type="gene ID" value="ENSG00000162910.19"/>
</dbReference>
<dbReference type="Ensembl" id="ENST00000366742.5">
    <molecule id="Q7Z7F7-1"/>
    <property type="protein sequence ID" value="ENSP00000355703.1"/>
    <property type="gene ID" value="ENSG00000162910.19"/>
</dbReference>
<dbReference type="Ensembl" id="ENST00000366744.5">
    <molecule id="Q7Z7F7-1"/>
    <property type="protein sequence ID" value="ENSP00000355705.1"/>
    <property type="gene ID" value="ENSG00000162910.19"/>
</dbReference>
<dbReference type="Ensembl" id="ENST00000366746.7">
    <molecule id="Q7Z7F7-1"/>
    <property type="protein sequence ID" value="ENSP00000355707.3"/>
    <property type="gene ID" value="ENSG00000162910.19"/>
</dbReference>
<dbReference type="Ensembl" id="ENST00000366747.7">
    <molecule id="Q7Z7F7-1"/>
    <property type="protein sequence ID" value="ENSP00000355708.3"/>
    <property type="gene ID" value="ENSG00000162910.19"/>
</dbReference>
<dbReference type="Ensembl" id="ENST00000391867.8">
    <molecule id="Q7Z7F7-1"/>
    <property type="protein sequence ID" value="ENSP00000375740.3"/>
    <property type="gene ID" value="ENSG00000162910.19"/>
</dbReference>
<dbReference type="Ensembl" id="ENST00000430433.5">
    <molecule id="Q7Z7F7-2"/>
    <property type="protein sequence ID" value="ENSP00000403614.1"/>
    <property type="gene ID" value="ENSG00000162910.19"/>
</dbReference>
<dbReference type="GeneID" id="128308"/>
<dbReference type="KEGG" id="hsa:128308"/>
<dbReference type="MANE-Select" id="ENST00000336520.8">
    <property type="protein sequence ID" value="ENSP00000337342.3"/>
    <property type="RefSeq nucleotide sequence ID" value="NM_181463.3"/>
    <property type="RefSeq protein sequence ID" value="NP_852128.1"/>
</dbReference>
<dbReference type="UCSC" id="uc001hrz.5">
    <molecule id="Q7Z7F7-1"/>
    <property type="organism name" value="human"/>
</dbReference>
<dbReference type="AGR" id="HGNC:16686"/>
<dbReference type="CTD" id="128308"/>
<dbReference type="GeneCards" id="MRPL55"/>
<dbReference type="HGNC" id="HGNC:16686">
    <property type="gene designation" value="MRPL55"/>
</dbReference>
<dbReference type="HPA" id="ENSG00000162910">
    <property type="expression patterns" value="Low tissue specificity"/>
</dbReference>
<dbReference type="MIM" id="611859">
    <property type="type" value="gene"/>
</dbReference>
<dbReference type="neXtProt" id="NX_Q7Z7F7"/>
<dbReference type="OpenTargets" id="ENSG00000162910"/>
<dbReference type="PharmGKB" id="PA30988"/>
<dbReference type="VEuPathDB" id="HostDB:ENSG00000162910"/>
<dbReference type="eggNOG" id="KOG4616">
    <property type="taxonomic scope" value="Eukaryota"/>
</dbReference>
<dbReference type="GeneTree" id="ENSGT00390000010309"/>
<dbReference type="HOGENOM" id="CLU_139855_0_0_1"/>
<dbReference type="InParanoid" id="Q7Z7F7"/>
<dbReference type="OMA" id="IRIRYKE"/>
<dbReference type="OrthoDB" id="9986315at2759"/>
<dbReference type="PAN-GO" id="Q7Z7F7">
    <property type="GO annotations" value="3 GO annotations based on evolutionary models"/>
</dbReference>
<dbReference type="PhylomeDB" id="Q7Z7F7"/>
<dbReference type="TreeFam" id="TF320422"/>
<dbReference type="PathwayCommons" id="Q7Z7F7"/>
<dbReference type="Reactome" id="R-HSA-5368286">
    <property type="pathway name" value="Mitochondrial translation initiation"/>
</dbReference>
<dbReference type="Reactome" id="R-HSA-5389840">
    <property type="pathway name" value="Mitochondrial translation elongation"/>
</dbReference>
<dbReference type="Reactome" id="R-HSA-5419276">
    <property type="pathway name" value="Mitochondrial translation termination"/>
</dbReference>
<dbReference type="SignaLink" id="Q7Z7F7"/>
<dbReference type="SIGNOR" id="Q7Z7F7"/>
<dbReference type="BioGRID-ORCS" id="128308">
    <property type="hits" value="432 hits in 1166 CRISPR screens"/>
</dbReference>
<dbReference type="ChiTaRS" id="MRPL55">
    <property type="organism name" value="human"/>
</dbReference>
<dbReference type="GeneWiki" id="MRPL55"/>
<dbReference type="GenomeRNAi" id="128308"/>
<dbReference type="Pharos" id="Q7Z7F7">
    <property type="development level" value="Tdark"/>
</dbReference>
<dbReference type="PRO" id="PR:Q7Z7F7"/>
<dbReference type="Proteomes" id="UP000005640">
    <property type="component" value="Chromosome 1"/>
</dbReference>
<dbReference type="RNAct" id="Q7Z7F7">
    <property type="molecule type" value="protein"/>
</dbReference>
<dbReference type="Bgee" id="ENSG00000162910">
    <property type="expression patterns" value="Expressed in apex of heart and 161 other cell types or tissues"/>
</dbReference>
<dbReference type="ExpressionAtlas" id="Q7Z7F7">
    <property type="expression patterns" value="baseline and differential"/>
</dbReference>
<dbReference type="GO" id="GO:0005743">
    <property type="term" value="C:mitochondrial inner membrane"/>
    <property type="evidence" value="ECO:0000304"/>
    <property type="project" value="Reactome"/>
</dbReference>
<dbReference type="GO" id="GO:0005762">
    <property type="term" value="C:mitochondrial large ribosomal subunit"/>
    <property type="evidence" value="ECO:0000314"/>
    <property type="project" value="UniProtKB"/>
</dbReference>
<dbReference type="GO" id="GO:0005739">
    <property type="term" value="C:mitochondrion"/>
    <property type="evidence" value="ECO:0000314"/>
    <property type="project" value="UniProtKB"/>
</dbReference>
<dbReference type="GO" id="GO:0003735">
    <property type="term" value="F:structural constituent of ribosome"/>
    <property type="evidence" value="ECO:0000250"/>
    <property type="project" value="UniProtKB"/>
</dbReference>
<dbReference type="GO" id="GO:0032543">
    <property type="term" value="P:mitochondrial translation"/>
    <property type="evidence" value="ECO:0000303"/>
    <property type="project" value="ComplexPortal"/>
</dbReference>
<dbReference type="GO" id="GO:0006412">
    <property type="term" value="P:translation"/>
    <property type="evidence" value="ECO:0000250"/>
    <property type="project" value="UniProtKB"/>
</dbReference>
<dbReference type="Gene3D" id="6.20.130.20">
    <property type="entry name" value="Mitochondrial ribosomal protein L55"/>
    <property type="match status" value="1"/>
</dbReference>
<dbReference type="InterPro" id="IPR018615">
    <property type="entry name" value="Ribosomal_mL55"/>
</dbReference>
<dbReference type="InterPro" id="IPR044884">
    <property type="entry name" value="Ribosomal_mL55_sf"/>
</dbReference>
<dbReference type="PANTHER" id="PTHR34095">
    <property type="entry name" value="39S RIBOSOMAL PROTEIN L55, MITOCHONDRIAL"/>
    <property type="match status" value="1"/>
</dbReference>
<dbReference type="PANTHER" id="PTHR34095:SF1">
    <property type="entry name" value="LARGE RIBOSOMAL SUBUNIT PROTEIN ML55"/>
    <property type="match status" value="1"/>
</dbReference>
<dbReference type="Pfam" id="PF09776">
    <property type="entry name" value="Mitoc_L55"/>
    <property type="match status" value="1"/>
</dbReference>
<comment type="subunit">
    <text evidence="3 4 9">Component of the mitochondrial large ribosomal subunit (mt-LSU) (PubMed:25838379, PubMed:28892042). Mature mammalian 55S mitochondrial ribosomes consist of a small (28S) and a large (39S) subunit. The 28S small subunit contains a 12S ribosomal RNA (12S mt-rRNA) and 30 different proteins. The 39S large subunit contains a 16S rRNA (16S mt-rRNA), a copy of mitochondrial valine transfer RNA (mt-tRNA(Val)), which plays an integral structural role, and 52 different proteins.</text>
</comment>
<comment type="subcellular location">
    <subcellularLocation>
        <location evidence="3 4">Mitochondrion</location>
    </subcellularLocation>
</comment>
<comment type="alternative products">
    <event type="alternative splicing"/>
    <isoform>
        <id>Q7Z7F7-1</id>
        <name>1</name>
        <sequence type="displayed"/>
    </isoform>
    <isoform>
        <id>Q7Z7F7-2</id>
        <name>2</name>
        <sequence type="described" ref="VSP_022477"/>
    </isoform>
</comment>
<comment type="similarity">
    <text evidence="8">Belongs to the mitochondrion-specific ribosomal protein mL55 family.</text>
</comment>
<feature type="transit peptide" description="Mitochondrion" evidence="2">
    <location>
        <begin position="1"/>
        <end position="33"/>
    </location>
</feature>
<feature type="chain" id="PRO_0000273099" description="Large ribosomal subunit protein mL55">
    <location>
        <begin position="34"/>
        <end position="128"/>
    </location>
</feature>
<feature type="modified residue" description="Phosphoserine" evidence="1">
    <location>
        <position position="85"/>
    </location>
</feature>
<feature type="splice variant" id="VSP_022477" description="In isoform 2." evidence="5">
    <original>G</original>
    <variation>GLAASSWLGGQNASDHSLWLLRKPRGSSCPGTGHQLC</variation>
    <location>
        <position position="9"/>
    </location>
</feature>
<feature type="sequence variant" id="VAR_030082" description="In dbSNP:rs822730.">
    <original>R</original>
    <variation>C</variation>
    <location>
        <position position="24"/>
    </location>
</feature>
<feature type="sequence variant" id="VAR_052045" description="In dbSNP:rs35265990.">
    <original>R</original>
    <variation>H</variation>
    <location>
        <position position="42"/>
    </location>
</feature>
<feature type="helix" evidence="15">
    <location>
        <begin position="37"/>
        <end position="39"/>
    </location>
</feature>
<feature type="strand" evidence="13">
    <location>
        <begin position="45"/>
        <end position="47"/>
    </location>
</feature>
<feature type="strand" evidence="14">
    <location>
        <begin position="52"/>
        <end position="60"/>
    </location>
</feature>
<feature type="strand" evidence="14">
    <location>
        <begin position="64"/>
        <end position="70"/>
    </location>
</feature>
<feature type="strand" evidence="13">
    <location>
        <begin position="74"/>
        <end position="76"/>
    </location>
</feature>
<gene>
    <name type="primary">MRPL55</name>
    <name type="ORF">UNQ5835/PRO19675</name>
</gene>
<sequence>MAAVGSLLGRLRQSTVKATGPALRRLHTSSWRADSSRASLTRVHRQAYARLYPVLLVKQDGSTIHIRYREPRRMLAMPIDLDTLSPEERRARLRKREAQLQSRKEYEQELSDDLHVERYRQFWTRTKK</sequence>
<reference key="1">
    <citation type="journal article" date="2003" name="Genome Res.">
        <title>The secreted protein discovery initiative (SPDI), a large-scale effort to identify novel human secreted and transmembrane proteins: a bioinformatics assessment.</title>
        <authorList>
            <person name="Clark H.F."/>
            <person name="Gurney A.L."/>
            <person name="Abaya E."/>
            <person name="Baker K."/>
            <person name="Baldwin D.T."/>
            <person name="Brush J."/>
            <person name="Chen J."/>
            <person name="Chow B."/>
            <person name="Chui C."/>
            <person name="Crowley C."/>
            <person name="Currell B."/>
            <person name="Deuel B."/>
            <person name="Dowd P."/>
            <person name="Eaton D."/>
            <person name="Foster J.S."/>
            <person name="Grimaldi C."/>
            <person name="Gu Q."/>
            <person name="Hass P.E."/>
            <person name="Heldens S."/>
            <person name="Huang A."/>
            <person name="Kim H.S."/>
            <person name="Klimowski L."/>
            <person name="Jin Y."/>
            <person name="Johnson S."/>
            <person name="Lee J."/>
            <person name="Lewis L."/>
            <person name="Liao D."/>
            <person name="Mark M.R."/>
            <person name="Robbie E."/>
            <person name="Sanchez C."/>
            <person name="Schoenfeld J."/>
            <person name="Seshagiri S."/>
            <person name="Simmons L."/>
            <person name="Singh J."/>
            <person name="Smith V."/>
            <person name="Stinson J."/>
            <person name="Vagts A."/>
            <person name="Vandlen R.L."/>
            <person name="Watanabe C."/>
            <person name="Wieand D."/>
            <person name="Woods K."/>
            <person name="Xie M.-H."/>
            <person name="Yansura D.G."/>
            <person name="Yi S."/>
            <person name="Yu G."/>
            <person name="Yuan J."/>
            <person name="Zhang M."/>
            <person name="Zhang Z."/>
            <person name="Goddard A.D."/>
            <person name="Wood W.I."/>
            <person name="Godowski P.J."/>
            <person name="Gray A.M."/>
        </authorList>
    </citation>
    <scope>NUCLEOTIDE SEQUENCE [LARGE SCALE MRNA] (ISOFORM 2)</scope>
</reference>
<reference key="2">
    <citation type="journal article" date="2006" name="Nature">
        <title>The DNA sequence and biological annotation of human chromosome 1.</title>
        <authorList>
            <person name="Gregory S.G."/>
            <person name="Barlow K.F."/>
            <person name="McLay K.E."/>
            <person name="Kaul R."/>
            <person name="Swarbreck D."/>
            <person name="Dunham A."/>
            <person name="Scott C.E."/>
            <person name="Howe K.L."/>
            <person name="Woodfine K."/>
            <person name="Spencer C.C.A."/>
            <person name="Jones M.C."/>
            <person name="Gillson C."/>
            <person name="Searle S."/>
            <person name="Zhou Y."/>
            <person name="Kokocinski F."/>
            <person name="McDonald L."/>
            <person name="Evans R."/>
            <person name="Phillips K."/>
            <person name="Atkinson A."/>
            <person name="Cooper R."/>
            <person name="Jones C."/>
            <person name="Hall R.E."/>
            <person name="Andrews T.D."/>
            <person name="Lloyd C."/>
            <person name="Ainscough R."/>
            <person name="Almeida J.P."/>
            <person name="Ambrose K.D."/>
            <person name="Anderson F."/>
            <person name="Andrew R.W."/>
            <person name="Ashwell R.I.S."/>
            <person name="Aubin K."/>
            <person name="Babbage A.K."/>
            <person name="Bagguley C.L."/>
            <person name="Bailey J."/>
            <person name="Beasley H."/>
            <person name="Bethel G."/>
            <person name="Bird C.P."/>
            <person name="Bray-Allen S."/>
            <person name="Brown J.Y."/>
            <person name="Brown A.J."/>
            <person name="Buckley D."/>
            <person name="Burton J."/>
            <person name="Bye J."/>
            <person name="Carder C."/>
            <person name="Chapman J.C."/>
            <person name="Clark S.Y."/>
            <person name="Clarke G."/>
            <person name="Clee C."/>
            <person name="Cobley V."/>
            <person name="Collier R.E."/>
            <person name="Corby N."/>
            <person name="Coville G.J."/>
            <person name="Davies J."/>
            <person name="Deadman R."/>
            <person name="Dunn M."/>
            <person name="Earthrowl M."/>
            <person name="Ellington A.G."/>
            <person name="Errington H."/>
            <person name="Frankish A."/>
            <person name="Frankland J."/>
            <person name="French L."/>
            <person name="Garner P."/>
            <person name="Garnett J."/>
            <person name="Gay L."/>
            <person name="Ghori M.R.J."/>
            <person name="Gibson R."/>
            <person name="Gilby L.M."/>
            <person name="Gillett W."/>
            <person name="Glithero R.J."/>
            <person name="Grafham D.V."/>
            <person name="Griffiths C."/>
            <person name="Griffiths-Jones S."/>
            <person name="Grocock R."/>
            <person name="Hammond S."/>
            <person name="Harrison E.S.I."/>
            <person name="Hart E."/>
            <person name="Haugen E."/>
            <person name="Heath P.D."/>
            <person name="Holmes S."/>
            <person name="Holt K."/>
            <person name="Howden P.J."/>
            <person name="Hunt A.R."/>
            <person name="Hunt S.E."/>
            <person name="Hunter G."/>
            <person name="Isherwood J."/>
            <person name="James R."/>
            <person name="Johnson C."/>
            <person name="Johnson D."/>
            <person name="Joy A."/>
            <person name="Kay M."/>
            <person name="Kershaw J.K."/>
            <person name="Kibukawa M."/>
            <person name="Kimberley A.M."/>
            <person name="King A."/>
            <person name="Knights A.J."/>
            <person name="Lad H."/>
            <person name="Laird G."/>
            <person name="Lawlor S."/>
            <person name="Leongamornlert D.A."/>
            <person name="Lloyd D.M."/>
            <person name="Loveland J."/>
            <person name="Lovell J."/>
            <person name="Lush M.J."/>
            <person name="Lyne R."/>
            <person name="Martin S."/>
            <person name="Mashreghi-Mohammadi M."/>
            <person name="Matthews L."/>
            <person name="Matthews N.S.W."/>
            <person name="McLaren S."/>
            <person name="Milne S."/>
            <person name="Mistry S."/>
            <person name="Moore M.J.F."/>
            <person name="Nickerson T."/>
            <person name="O'Dell C.N."/>
            <person name="Oliver K."/>
            <person name="Palmeiri A."/>
            <person name="Palmer S.A."/>
            <person name="Parker A."/>
            <person name="Patel D."/>
            <person name="Pearce A.V."/>
            <person name="Peck A.I."/>
            <person name="Pelan S."/>
            <person name="Phelps K."/>
            <person name="Phillimore B.J."/>
            <person name="Plumb R."/>
            <person name="Rajan J."/>
            <person name="Raymond C."/>
            <person name="Rouse G."/>
            <person name="Saenphimmachak C."/>
            <person name="Sehra H.K."/>
            <person name="Sheridan E."/>
            <person name="Shownkeen R."/>
            <person name="Sims S."/>
            <person name="Skuce C.D."/>
            <person name="Smith M."/>
            <person name="Steward C."/>
            <person name="Subramanian S."/>
            <person name="Sycamore N."/>
            <person name="Tracey A."/>
            <person name="Tromans A."/>
            <person name="Van Helmond Z."/>
            <person name="Wall M."/>
            <person name="Wallis J.M."/>
            <person name="White S."/>
            <person name="Whitehead S.L."/>
            <person name="Wilkinson J.E."/>
            <person name="Willey D.L."/>
            <person name="Williams H."/>
            <person name="Wilming L."/>
            <person name="Wray P.W."/>
            <person name="Wu Z."/>
            <person name="Coulson A."/>
            <person name="Vaudin M."/>
            <person name="Sulston J.E."/>
            <person name="Durbin R.M."/>
            <person name="Hubbard T."/>
            <person name="Wooster R."/>
            <person name="Dunham I."/>
            <person name="Carter N.P."/>
            <person name="McVean G."/>
            <person name="Ross M.T."/>
            <person name="Harrow J."/>
            <person name="Olson M.V."/>
            <person name="Beck S."/>
            <person name="Rogers J."/>
            <person name="Bentley D.R."/>
        </authorList>
    </citation>
    <scope>NUCLEOTIDE SEQUENCE [LARGE SCALE GENOMIC DNA]</scope>
</reference>
<reference key="3">
    <citation type="journal article" date="2004" name="Genome Res.">
        <title>The status, quality, and expansion of the NIH full-length cDNA project: the Mammalian Gene Collection (MGC).</title>
        <authorList>
            <consortium name="The MGC Project Team"/>
        </authorList>
    </citation>
    <scope>NUCLEOTIDE SEQUENCE [LARGE SCALE MRNA] (ISOFORM 1)</scope>
    <source>
        <tissue>Brain</tissue>
    </source>
</reference>
<reference key="4">
    <citation type="journal article" date="2001" name="J. Biol. Chem.">
        <title>The large subunit of the mammalian mitochondrial ribosome. Analysis of the complement of ribosomal proteins present.</title>
        <authorList>
            <person name="Koc E.C."/>
            <person name="Burkhart W."/>
            <person name="Blackburn K."/>
            <person name="Moyer M.B."/>
            <person name="Schlatzer D.M."/>
            <person name="Moseley A."/>
            <person name="Spremulli L.L."/>
        </authorList>
    </citation>
    <scope>IDENTIFICATION</scope>
</reference>
<reference key="5">
    <citation type="journal article" date="2011" name="BMC Syst. Biol.">
        <title>Initial characterization of the human central proteome.</title>
        <authorList>
            <person name="Burkard T.R."/>
            <person name="Planyavsky M."/>
            <person name="Kaupe I."/>
            <person name="Breitwieser F.P."/>
            <person name="Buerckstuemmer T."/>
            <person name="Bennett K.L."/>
            <person name="Superti-Furga G."/>
            <person name="Colinge J."/>
        </authorList>
    </citation>
    <scope>IDENTIFICATION BY MASS SPECTROMETRY [LARGE SCALE ANALYSIS]</scope>
</reference>
<reference key="6">
    <citation type="journal article" date="2015" name="Proteomics">
        <title>N-terminome analysis of the human mitochondrial proteome.</title>
        <authorList>
            <person name="Vaca Jacome A.S."/>
            <person name="Rabilloud T."/>
            <person name="Schaeffer-Reiss C."/>
            <person name="Rompais M."/>
            <person name="Ayoub D."/>
            <person name="Lane L."/>
            <person name="Bairoch A."/>
            <person name="Van Dorsselaer A."/>
            <person name="Carapito C."/>
        </authorList>
    </citation>
    <scope>IDENTIFICATION BY MASS SPECTROMETRY [LARGE SCALE ANALYSIS]</scope>
</reference>
<reference key="7">
    <citation type="journal article" date="2016" name="Annu. Rev. Biochem.">
        <title>Structure and function of the mitochondrial ribosome.</title>
        <authorList>
            <person name="Greber B.J."/>
            <person name="Ban N."/>
        </authorList>
    </citation>
    <scope>NOMENCLATURE</scope>
</reference>
<reference evidence="10" key="8">
    <citation type="journal article" date="2015" name="Science">
        <title>Ribosome. The structure of the human mitochondrial ribosome.</title>
        <authorList>
            <person name="Amunts A."/>
            <person name="Brown A."/>
            <person name="Toots J."/>
            <person name="Scheres S.H."/>
            <person name="Ramakrishnan V."/>
        </authorList>
    </citation>
    <scope>STRUCTURE BY ELECTRON MICROSCOPY (3.50 ANGSTROMS)</scope>
    <scope>SUBCELLULAR LOCATION</scope>
</reference>
<reference evidence="11 12" key="9">
    <citation type="journal article" date="2017" name="Nat. Struct. Mol. Biol.">
        <title>Structures of the human mitochondrial ribosome in native states of assembly.</title>
        <authorList>
            <person name="Brown A."/>
            <person name="Rathore S."/>
            <person name="Kimanius D."/>
            <person name="Aibara S."/>
            <person name="Bai X.C."/>
            <person name="Rorbach J."/>
            <person name="Amunts A."/>
            <person name="Ramakrishnan V."/>
        </authorList>
    </citation>
    <scope>STRUCTURE BY ELECTRON MICROSCOPY (3.03 ANGSTROMS)</scope>
    <scope>SUBCELLULAR LOCATION</scope>
    <scope>SUBUNIT</scope>
</reference>
<accession>Q7Z7F7</accession>
<accession>Q5TBY3</accession>
<accession>Q5TBY6</accession>
<accession>Q6UWI8</accession>
<organism>
    <name type="scientific">Homo sapiens</name>
    <name type="common">Human</name>
    <dbReference type="NCBI Taxonomy" id="9606"/>
    <lineage>
        <taxon>Eukaryota</taxon>
        <taxon>Metazoa</taxon>
        <taxon>Chordata</taxon>
        <taxon>Craniata</taxon>
        <taxon>Vertebrata</taxon>
        <taxon>Euteleostomi</taxon>
        <taxon>Mammalia</taxon>
        <taxon>Eutheria</taxon>
        <taxon>Euarchontoglires</taxon>
        <taxon>Primates</taxon>
        <taxon>Haplorrhini</taxon>
        <taxon>Catarrhini</taxon>
        <taxon>Hominidae</taxon>
        <taxon>Homo</taxon>
    </lineage>
</organism>
<proteinExistence type="evidence at protein level"/>
<name>RM55_HUMAN</name>